<comment type="function">
    <text evidence="1">F(1)F(0) ATP synthase produces ATP from ADP in the presence of a proton or sodium gradient. F-type ATPases consist of two structural domains, F(1) containing the extramembraneous catalytic core and F(0) containing the membrane proton channel, linked together by a central stalk and a peripheral stalk. During catalysis, ATP synthesis in the catalytic domain of F(1) is coupled via a rotary mechanism of the central stalk subunits to proton translocation.</text>
</comment>
<comment type="function">
    <text evidence="1">Component of the F(0) channel, it forms part of the peripheral stalk, linking F(1) to F(0).</text>
</comment>
<comment type="subunit">
    <text evidence="1">F-type ATPases have 2 components, F(1) - the catalytic core - and F(0) - the membrane proton channel. F(1) has five subunits: alpha(3), beta(3), gamma(1), delta(1), epsilon(1). F(0) has four main subunits: a(1), b(1), b'(1) and c(10-14). The alpha and beta chains form an alternating ring which encloses part of the gamma chain. F(1) is attached to F(0) by a central stalk formed by the gamma and epsilon chains, while a peripheral stalk is formed by the delta, b and b' chains.</text>
</comment>
<comment type="subcellular location">
    <subcellularLocation>
        <location evidence="1">Plastid</location>
        <location evidence="1">Chloroplast thylakoid membrane</location>
        <topology evidence="1">Single-pass membrane protein</topology>
    </subcellularLocation>
</comment>
<comment type="miscellaneous">
    <text>In plastids the F-type ATPase is also known as CF(1)CF(0).</text>
</comment>
<comment type="similarity">
    <text evidence="1">Belongs to the ATPase B chain family.</text>
</comment>
<proteinExistence type="inferred from homology"/>
<keyword id="KW-0066">ATP synthesis</keyword>
<keyword id="KW-0067">ATP-binding</keyword>
<keyword id="KW-0138">CF(0)</keyword>
<keyword id="KW-0150">Chloroplast</keyword>
<keyword id="KW-0375">Hydrogen ion transport</keyword>
<keyword id="KW-0406">Ion transport</keyword>
<keyword id="KW-0472">Membrane</keyword>
<keyword id="KW-0547">Nucleotide-binding</keyword>
<keyword id="KW-0934">Plastid</keyword>
<keyword id="KW-0793">Thylakoid</keyword>
<keyword id="KW-0812">Transmembrane</keyword>
<keyword id="KW-1133">Transmembrane helix</keyword>
<keyword id="KW-0813">Transport</keyword>
<geneLocation type="chloroplast"/>
<name>ATPF_EUGGR</name>
<gene>
    <name evidence="1" type="primary">atpF</name>
</gene>
<organism>
    <name type="scientific">Euglena gracilis</name>
    <dbReference type="NCBI Taxonomy" id="3039"/>
    <lineage>
        <taxon>Eukaryota</taxon>
        <taxon>Discoba</taxon>
        <taxon>Euglenozoa</taxon>
        <taxon>Euglenida</taxon>
        <taxon>Spirocuta</taxon>
        <taxon>Euglenophyceae</taxon>
        <taxon>Euglenales</taxon>
        <taxon>Euglenaceae</taxon>
        <taxon>Euglena</taxon>
    </lineage>
</organism>
<evidence type="ECO:0000255" key="1">
    <source>
        <dbReference type="HAMAP-Rule" id="MF_01398"/>
    </source>
</evidence>
<sequence length="183" mass="21127">MVIDNFNIFTIISNAKTFGINTNVFETNIINLAIVVGTLFYYGKLTLSDLLKTRKKTIIKNILDIDEKIRSSQSSLYLAELEFENAAKKASLIRSNGTTFCLKSFDIIRSSVNEDIKRLKQSKRLILRTEDKKSVREIFKNLYSQACQKAKATIIKRLNSKIHKKIILKKMEKMSLKKLKPKY</sequence>
<protein>
    <recommendedName>
        <fullName evidence="1">ATP synthase subunit b, chloroplastic</fullName>
    </recommendedName>
    <alternativeName>
        <fullName evidence="1">ATP synthase F(0) sector subunit b</fullName>
    </alternativeName>
    <alternativeName>
        <fullName evidence="1">ATPase subunit I</fullName>
    </alternativeName>
</protein>
<reference key="1">
    <citation type="journal article" date="1993" name="Curr. Genet.">
        <title>A novel Euglena gracilis chloroplast operon encoding four ATP synthase subunits and two ribosomal proteins contains 17 introns.</title>
        <authorList>
            <person name="Drager R.G."/>
            <person name="Hallick R.B."/>
        </authorList>
    </citation>
    <scope>NUCLEOTIDE SEQUENCE [GENOMIC DNA]</scope>
    <source>
        <strain>Z / UTEX 753</strain>
    </source>
</reference>
<reference key="2">
    <citation type="journal article" date="1993" name="Nucleic Acids Res.">
        <title>Complete sequence of Euglena gracilis chloroplast DNA.</title>
        <authorList>
            <person name="Hallick R.B."/>
            <person name="Hong L."/>
            <person name="Drager R.G."/>
            <person name="Favreau M.R."/>
            <person name="Monfort A."/>
            <person name="Orsat B."/>
            <person name="Spielmann A."/>
            <person name="Stutz E."/>
        </authorList>
    </citation>
    <scope>NUCLEOTIDE SEQUENCE [LARGE SCALE GENOMIC DNA]</scope>
    <source>
        <strain>Z / UTEX 753</strain>
    </source>
</reference>
<accession>P30393</accession>
<feature type="chain" id="PRO_0000082407" description="ATP synthase subunit b, chloroplastic">
    <location>
        <begin position="1"/>
        <end position="183"/>
    </location>
</feature>
<feature type="transmembrane region" description="Helical" evidence="1">
    <location>
        <begin position="20"/>
        <end position="42"/>
    </location>
</feature>
<dbReference type="EMBL" id="Z11874">
    <property type="protein sequence ID" value="CAA77931.1"/>
    <property type="molecule type" value="Genomic_DNA"/>
</dbReference>
<dbReference type="EMBL" id="X70810">
    <property type="protein sequence ID" value="CAA50114.1"/>
    <property type="molecule type" value="Genomic_DNA"/>
</dbReference>
<dbReference type="PIR" id="S29800">
    <property type="entry name" value="PWEGI"/>
</dbReference>
<dbReference type="RefSeq" id="NP_041927.1">
    <property type="nucleotide sequence ID" value="NC_001603.2"/>
</dbReference>
<dbReference type="SMR" id="P30393"/>
<dbReference type="GeneID" id="807510"/>
<dbReference type="GO" id="GO:0009535">
    <property type="term" value="C:chloroplast thylakoid membrane"/>
    <property type="evidence" value="ECO:0007669"/>
    <property type="project" value="UniProtKB-SubCell"/>
</dbReference>
<dbReference type="GO" id="GO:0045259">
    <property type="term" value="C:proton-transporting ATP synthase complex"/>
    <property type="evidence" value="ECO:0007669"/>
    <property type="project" value="UniProtKB-KW"/>
</dbReference>
<dbReference type="GO" id="GO:0005524">
    <property type="term" value="F:ATP binding"/>
    <property type="evidence" value="ECO:0007669"/>
    <property type="project" value="UniProtKB-KW"/>
</dbReference>
<dbReference type="GO" id="GO:0046933">
    <property type="term" value="F:proton-transporting ATP synthase activity, rotational mechanism"/>
    <property type="evidence" value="ECO:0007669"/>
    <property type="project" value="UniProtKB-UniRule"/>
</dbReference>
<dbReference type="CDD" id="cd06503">
    <property type="entry name" value="ATP-synt_Fo_b"/>
    <property type="match status" value="1"/>
</dbReference>
<dbReference type="HAMAP" id="MF_01398">
    <property type="entry name" value="ATP_synth_b_bprime"/>
    <property type="match status" value="1"/>
</dbReference>
<dbReference type="InterPro" id="IPR002146">
    <property type="entry name" value="ATP_synth_b/b'su_bac/chlpt"/>
</dbReference>
<dbReference type="PANTHER" id="PTHR34264">
    <property type="entry name" value="ATP SYNTHASE SUBUNIT B, CHLOROPLASTIC"/>
    <property type="match status" value="1"/>
</dbReference>
<dbReference type="PANTHER" id="PTHR34264:SF3">
    <property type="entry name" value="ATP SYNTHASE SUBUNIT B, CHLOROPLASTIC"/>
    <property type="match status" value="1"/>
</dbReference>
<dbReference type="Pfam" id="PF00430">
    <property type="entry name" value="ATP-synt_B"/>
    <property type="match status" value="1"/>
</dbReference>